<reference key="1">
    <citation type="journal article" date="1998" name="Microbiology">
        <title>A 28 kbp segment from the spoVM region of the Bacillus subtilis 168 genome.</title>
        <authorList>
            <person name="Foulger D."/>
            <person name="Errington J."/>
        </authorList>
    </citation>
    <scope>NUCLEOTIDE SEQUENCE [GENOMIC DNA]</scope>
    <source>
        <strain>168</strain>
    </source>
</reference>
<reference key="2">
    <citation type="journal article" date="1997" name="Nature">
        <title>The complete genome sequence of the Gram-positive bacterium Bacillus subtilis.</title>
        <authorList>
            <person name="Kunst F."/>
            <person name="Ogasawara N."/>
            <person name="Moszer I."/>
            <person name="Albertini A.M."/>
            <person name="Alloni G."/>
            <person name="Azevedo V."/>
            <person name="Bertero M.G."/>
            <person name="Bessieres P."/>
            <person name="Bolotin A."/>
            <person name="Borchert S."/>
            <person name="Borriss R."/>
            <person name="Boursier L."/>
            <person name="Brans A."/>
            <person name="Braun M."/>
            <person name="Brignell S.C."/>
            <person name="Bron S."/>
            <person name="Brouillet S."/>
            <person name="Bruschi C.V."/>
            <person name="Caldwell B."/>
            <person name="Capuano V."/>
            <person name="Carter N.M."/>
            <person name="Choi S.-K."/>
            <person name="Codani J.-J."/>
            <person name="Connerton I.F."/>
            <person name="Cummings N.J."/>
            <person name="Daniel R.A."/>
            <person name="Denizot F."/>
            <person name="Devine K.M."/>
            <person name="Duesterhoeft A."/>
            <person name="Ehrlich S.D."/>
            <person name="Emmerson P.T."/>
            <person name="Entian K.-D."/>
            <person name="Errington J."/>
            <person name="Fabret C."/>
            <person name="Ferrari E."/>
            <person name="Foulger D."/>
            <person name="Fritz C."/>
            <person name="Fujita M."/>
            <person name="Fujita Y."/>
            <person name="Fuma S."/>
            <person name="Galizzi A."/>
            <person name="Galleron N."/>
            <person name="Ghim S.-Y."/>
            <person name="Glaser P."/>
            <person name="Goffeau A."/>
            <person name="Golightly E.J."/>
            <person name="Grandi G."/>
            <person name="Guiseppi G."/>
            <person name="Guy B.J."/>
            <person name="Haga K."/>
            <person name="Haiech J."/>
            <person name="Harwood C.R."/>
            <person name="Henaut A."/>
            <person name="Hilbert H."/>
            <person name="Holsappel S."/>
            <person name="Hosono S."/>
            <person name="Hullo M.-F."/>
            <person name="Itaya M."/>
            <person name="Jones L.-M."/>
            <person name="Joris B."/>
            <person name="Karamata D."/>
            <person name="Kasahara Y."/>
            <person name="Klaerr-Blanchard M."/>
            <person name="Klein C."/>
            <person name="Kobayashi Y."/>
            <person name="Koetter P."/>
            <person name="Koningstein G."/>
            <person name="Krogh S."/>
            <person name="Kumano M."/>
            <person name="Kurita K."/>
            <person name="Lapidus A."/>
            <person name="Lardinois S."/>
            <person name="Lauber J."/>
            <person name="Lazarevic V."/>
            <person name="Lee S.-M."/>
            <person name="Levine A."/>
            <person name="Liu H."/>
            <person name="Masuda S."/>
            <person name="Mauel C."/>
            <person name="Medigue C."/>
            <person name="Medina N."/>
            <person name="Mellado R.P."/>
            <person name="Mizuno M."/>
            <person name="Moestl D."/>
            <person name="Nakai S."/>
            <person name="Noback M."/>
            <person name="Noone D."/>
            <person name="O'Reilly M."/>
            <person name="Ogawa K."/>
            <person name="Ogiwara A."/>
            <person name="Oudega B."/>
            <person name="Park S.-H."/>
            <person name="Parro V."/>
            <person name="Pohl T.M."/>
            <person name="Portetelle D."/>
            <person name="Porwollik S."/>
            <person name="Prescott A.M."/>
            <person name="Presecan E."/>
            <person name="Pujic P."/>
            <person name="Purnelle B."/>
            <person name="Rapoport G."/>
            <person name="Rey M."/>
            <person name="Reynolds S."/>
            <person name="Rieger M."/>
            <person name="Rivolta C."/>
            <person name="Rocha E."/>
            <person name="Roche B."/>
            <person name="Rose M."/>
            <person name="Sadaie Y."/>
            <person name="Sato T."/>
            <person name="Scanlan E."/>
            <person name="Schleich S."/>
            <person name="Schroeter R."/>
            <person name="Scoffone F."/>
            <person name="Sekiguchi J."/>
            <person name="Sekowska A."/>
            <person name="Seror S.J."/>
            <person name="Serror P."/>
            <person name="Shin B.-S."/>
            <person name="Soldo B."/>
            <person name="Sorokin A."/>
            <person name="Tacconi E."/>
            <person name="Takagi T."/>
            <person name="Takahashi H."/>
            <person name="Takemaru K."/>
            <person name="Takeuchi M."/>
            <person name="Tamakoshi A."/>
            <person name="Tanaka T."/>
            <person name="Terpstra P."/>
            <person name="Tognoni A."/>
            <person name="Tosato V."/>
            <person name="Uchiyama S."/>
            <person name="Vandenbol M."/>
            <person name="Vannier F."/>
            <person name="Vassarotti A."/>
            <person name="Viari A."/>
            <person name="Wambutt R."/>
            <person name="Wedler E."/>
            <person name="Wedler H."/>
            <person name="Weitzenegger T."/>
            <person name="Winters P."/>
            <person name="Wipat A."/>
            <person name="Yamamoto H."/>
            <person name="Yamane K."/>
            <person name="Yasumoto K."/>
            <person name="Yata K."/>
            <person name="Yoshida K."/>
            <person name="Yoshikawa H.-F."/>
            <person name="Zumstein E."/>
            <person name="Yoshikawa H."/>
            <person name="Danchin A."/>
        </authorList>
    </citation>
    <scope>NUCLEOTIDE SEQUENCE [LARGE SCALE GENOMIC DNA]</scope>
    <source>
        <strain>168</strain>
    </source>
</reference>
<accession>O34607</accession>
<keyword id="KW-0004">4Fe-4S</keyword>
<keyword id="KW-0312">Gluconeogenesis</keyword>
<keyword id="KW-0408">Iron</keyword>
<keyword id="KW-0411">Iron-sulfur</keyword>
<keyword id="KW-0456">Lyase</keyword>
<keyword id="KW-0479">Metal-binding</keyword>
<keyword id="KW-1185">Reference proteome</keyword>
<dbReference type="EC" id="4.3.1.17"/>
<dbReference type="EMBL" id="Y13937">
    <property type="protein sequence ID" value="CAA74259.1"/>
    <property type="molecule type" value="Genomic_DNA"/>
</dbReference>
<dbReference type="EMBL" id="AL009126">
    <property type="protein sequence ID" value="CAB13459.1"/>
    <property type="molecule type" value="Genomic_DNA"/>
</dbReference>
<dbReference type="PIR" id="G69879">
    <property type="entry name" value="G69879"/>
</dbReference>
<dbReference type="RefSeq" id="NP_389468.1">
    <property type="nucleotide sequence ID" value="NC_000964.3"/>
</dbReference>
<dbReference type="RefSeq" id="WP_003232049.1">
    <property type="nucleotide sequence ID" value="NZ_OZ025638.1"/>
</dbReference>
<dbReference type="SMR" id="O34607"/>
<dbReference type="FunCoup" id="O34607">
    <property type="interactions" value="247"/>
</dbReference>
<dbReference type="STRING" id="224308.BSU15860"/>
<dbReference type="PaxDb" id="224308-BSU15860"/>
<dbReference type="EnsemblBacteria" id="CAB13459">
    <property type="protein sequence ID" value="CAB13459"/>
    <property type="gene ID" value="BSU_15860"/>
</dbReference>
<dbReference type="GeneID" id="86873905"/>
<dbReference type="GeneID" id="937109"/>
<dbReference type="KEGG" id="bsu:BSU15860"/>
<dbReference type="PATRIC" id="fig|224308.179.peg.1726"/>
<dbReference type="eggNOG" id="COG1760">
    <property type="taxonomic scope" value="Bacteria"/>
</dbReference>
<dbReference type="InParanoid" id="O34607"/>
<dbReference type="OrthoDB" id="9805537at2"/>
<dbReference type="PhylomeDB" id="O34607"/>
<dbReference type="BioCyc" id="BSUB:BSU15860-MONOMER"/>
<dbReference type="UniPathway" id="UPA00138"/>
<dbReference type="Proteomes" id="UP000001570">
    <property type="component" value="Chromosome"/>
</dbReference>
<dbReference type="GO" id="GO:0051539">
    <property type="term" value="F:4 iron, 4 sulfur cluster binding"/>
    <property type="evidence" value="ECO:0007669"/>
    <property type="project" value="UniProtKB-KW"/>
</dbReference>
<dbReference type="GO" id="GO:0003941">
    <property type="term" value="F:L-serine ammonia-lyase activity"/>
    <property type="evidence" value="ECO:0000318"/>
    <property type="project" value="GO_Central"/>
</dbReference>
<dbReference type="GO" id="GO:0046872">
    <property type="term" value="F:metal ion binding"/>
    <property type="evidence" value="ECO:0007669"/>
    <property type="project" value="UniProtKB-KW"/>
</dbReference>
<dbReference type="GO" id="GO:0006094">
    <property type="term" value="P:gluconeogenesis"/>
    <property type="evidence" value="ECO:0007669"/>
    <property type="project" value="UniProtKB-UniPathway"/>
</dbReference>
<dbReference type="InterPro" id="IPR051318">
    <property type="entry name" value="Fe-S_L-Ser"/>
</dbReference>
<dbReference type="InterPro" id="IPR005130">
    <property type="entry name" value="Ser_deHydtase-like_asu"/>
</dbReference>
<dbReference type="InterPro" id="IPR004642">
    <property type="entry name" value="Ser_deHydtase_asu"/>
</dbReference>
<dbReference type="NCBIfam" id="TIGR00718">
    <property type="entry name" value="sda_alpha"/>
    <property type="match status" value="1"/>
</dbReference>
<dbReference type="PANTHER" id="PTHR30182">
    <property type="entry name" value="L-SERINE DEHYDRATASE"/>
    <property type="match status" value="1"/>
</dbReference>
<dbReference type="PANTHER" id="PTHR30182:SF1">
    <property type="entry name" value="L-SERINE DEHYDRATASE 1"/>
    <property type="match status" value="1"/>
</dbReference>
<dbReference type="Pfam" id="PF03313">
    <property type="entry name" value="SDH_alpha"/>
    <property type="match status" value="1"/>
</dbReference>
<organism>
    <name type="scientific">Bacillus subtilis (strain 168)</name>
    <dbReference type="NCBI Taxonomy" id="224308"/>
    <lineage>
        <taxon>Bacteria</taxon>
        <taxon>Bacillati</taxon>
        <taxon>Bacillota</taxon>
        <taxon>Bacilli</taxon>
        <taxon>Bacillales</taxon>
        <taxon>Bacillaceae</taxon>
        <taxon>Bacillus</taxon>
    </lineage>
</organism>
<comment type="catalytic activity">
    <reaction>
        <text>L-serine = pyruvate + NH4(+)</text>
        <dbReference type="Rhea" id="RHEA:19169"/>
        <dbReference type="ChEBI" id="CHEBI:15361"/>
        <dbReference type="ChEBI" id="CHEBI:28938"/>
        <dbReference type="ChEBI" id="CHEBI:33384"/>
        <dbReference type="EC" id="4.3.1.17"/>
    </reaction>
</comment>
<comment type="cofactor">
    <cofactor evidence="1">
        <name>[4Fe-4S] cluster</name>
        <dbReference type="ChEBI" id="CHEBI:49883"/>
    </cofactor>
    <text evidence="1">Binds 1 [4Fe-4S] cluster.</text>
</comment>
<comment type="pathway">
    <text>Carbohydrate biosynthesis; gluconeogenesis.</text>
</comment>
<comment type="subunit">
    <text evidence="1">Heterodimer of an alpha chain and a beta chain.</text>
</comment>
<comment type="similarity">
    <text evidence="2">Belongs to the iron-sulfur dependent L-serine dehydratase family.</text>
</comment>
<protein>
    <recommendedName>
        <fullName>Probable L-serine dehydratase, alpha chain</fullName>
        <shortName>SDH</shortName>
        <ecNumber>4.3.1.17</ecNumber>
    </recommendedName>
    <alternativeName>
        <fullName>L-serine deaminase</fullName>
        <shortName>L-SD</shortName>
    </alternativeName>
</protein>
<gene>
    <name type="primary">sdaAA</name>
    <name type="synonym">ylpA</name>
    <name type="ordered locus">BSU15860</name>
</gene>
<name>SDHAA_BACSU</name>
<proteinExistence type="inferred from homology"/>
<feature type="chain" id="PRO_0000171912" description="Probable L-serine dehydratase, alpha chain">
    <location>
        <begin position="1"/>
        <end position="300"/>
    </location>
</feature>
<sequence length="300" mass="30936">MFRNVKELIEITKEKQILISDVMIAQEMEVTEKTKEDIFQQMDHNLSVMEAAVQKGLEGVTSQTGLTGGDAVKLQAYIRSGKSLSGPLILDAVSKAVATNEVNAAMGTICATPTAGSAGVVPGTLFAVKEKLNPTREQMIRFLFTAGAFGFVVANNASISGAAGGCQAEVGSASGMAAAAIVEMAGGTPEQSAEAMAITLKNMLGLVCDPVAGLVEVPCVKRNAMGASNAMIAADMALAGITSRIPCDEVIDAMYKIGQTMPTALRETGQGGLAATPTGRELEKKIFGGALGSRETTSAN</sequence>
<evidence type="ECO:0000250" key="1"/>
<evidence type="ECO:0000305" key="2"/>